<dbReference type="EMBL" id="AAFI02000150">
    <property type="protein sequence ID" value="EAL62447.1"/>
    <property type="molecule type" value="Genomic_DNA"/>
</dbReference>
<dbReference type="RefSeq" id="XP_635943.1">
    <property type="nucleotide sequence ID" value="XM_630851.1"/>
</dbReference>
<dbReference type="PaxDb" id="44689-DDB0215951"/>
<dbReference type="EnsemblProtists" id="EAL62447">
    <property type="protein sequence ID" value="EAL62447"/>
    <property type="gene ID" value="DDB_G0290003"/>
</dbReference>
<dbReference type="GeneID" id="8627425"/>
<dbReference type="KEGG" id="ddi:DDB_G0290003"/>
<dbReference type="dictyBase" id="DDB_G0290003"/>
<dbReference type="HOGENOM" id="CLU_3000424_0_0_1"/>
<dbReference type="InParanoid" id="Q54GQ9"/>
<dbReference type="PRO" id="PR:Q54GQ9"/>
<dbReference type="Proteomes" id="UP000002195">
    <property type="component" value="Chromosome 5"/>
</dbReference>
<organism>
    <name type="scientific">Dictyostelium discoideum</name>
    <name type="common">Social amoeba</name>
    <dbReference type="NCBI Taxonomy" id="44689"/>
    <lineage>
        <taxon>Eukaryota</taxon>
        <taxon>Amoebozoa</taxon>
        <taxon>Evosea</taxon>
        <taxon>Eumycetozoa</taxon>
        <taxon>Dictyostelia</taxon>
        <taxon>Dictyosteliales</taxon>
        <taxon>Dictyosteliaceae</taxon>
        <taxon>Dictyostelium</taxon>
    </lineage>
</organism>
<keyword id="KW-1185">Reference proteome</keyword>
<feature type="chain" id="PRO_0000346931" description="Putative uncharacterized protein DDB_G0290003">
    <location>
        <begin position="1"/>
        <end position="57"/>
    </location>
</feature>
<accession>Q54GQ9</accession>
<protein>
    <recommendedName>
        <fullName>Putative uncharacterized protein DDB_G0290003</fullName>
    </recommendedName>
</protein>
<reference key="1">
    <citation type="journal article" date="2005" name="Nature">
        <title>The genome of the social amoeba Dictyostelium discoideum.</title>
        <authorList>
            <person name="Eichinger L."/>
            <person name="Pachebat J.A."/>
            <person name="Gloeckner G."/>
            <person name="Rajandream M.A."/>
            <person name="Sucgang R."/>
            <person name="Berriman M."/>
            <person name="Song J."/>
            <person name="Olsen R."/>
            <person name="Szafranski K."/>
            <person name="Xu Q."/>
            <person name="Tunggal B."/>
            <person name="Kummerfeld S."/>
            <person name="Madera M."/>
            <person name="Konfortov B.A."/>
            <person name="Rivero F."/>
            <person name="Bankier A.T."/>
            <person name="Lehmann R."/>
            <person name="Hamlin N."/>
            <person name="Davies R."/>
            <person name="Gaudet P."/>
            <person name="Fey P."/>
            <person name="Pilcher K."/>
            <person name="Chen G."/>
            <person name="Saunders D."/>
            <person name="Sodergren E.J."/>
            <person name="Davis P."/>
            <person name="Kerhornou A."/>
            <person name="Nie X."/>
            <person name="Hall N."/>
            <person name="Anjard C."/>
            <person name="Hemphill L."/>
            <person name="Bason N."/>
            <person name="Farbrother P."/>
            <person name="Desany B."/>
            <person name="Just E."/>
            <person name="Morio T."/>
            <person name="Rost R."/>
            <person name="Churcher C.M."/>
            <person name="Cooper J."/>
            <person name="Haydock S."/>
            <person name="van Driessche N."/>
            <person name="Cronin A."/>
            <person name="Goodhead I."/>
            <person name="Muzny D.M."/>
            <person name="Mourier T."/>
            <person name="Pain A."/>
            <person name="Lu M."/>
            <person name="Harper D."/>
            <person name="Lindsay R."/>
            <person name="Hauser H."/>
            <person name="James K.D."/>
            <person name="Quiles M."/>
            <person name="Madan Babu M."/>
            <person name="Saito T."/>
            <person name="Buchrieser C."/>
            <person name="Wardroper A."/>
            <person name="Felder M."/>
            <person name="Thangavelu M."/>
            <person name="Johnson D."/>
            <person name="Knights A."/>
            <person name="Loulseged H."/>
            <person name="Mungall K.L."/>
            <person name="Oliver K."/>
            <person name="Price C."/>
            <person name="Quail M.A."/>
            <person name="Urushihara H."/>
            <person name="Hernandez J."/>
            <person name="Rabbinowitsch E."/>
            <person name="Steffen D."/>
            <person name="Sanders M."/>
            <person name="Ma J."/>
            <person name="Kohara Y."/>
            <person name="Sharp S."/>
            <person name="Simmonds M.N."/>
            <person name="Spiegler S."/>
            <person name="Tivey A."/>
            <person name="Sugano S."/>
            <person name="White B."/>
            <person name="Walker D."/>
            <person name="Woodward J.R."/>
            <person name="Winckler T."/>
            <person name="Tanaka Y."/>
            <person name="Shaulsky G."/>
            <person name="Schleicher M."/>
            <person name="Weinstock G.M."/>
            <person name="Rosenthal A."/>
            <person name="Cox E.C."/>
            <person name="Chisholm R.L."/>
            <person name="Gibbs R.A."/>
            <person name="Loomis W.F."/>
            <person name="Platzer M."/>
            <person name="Kay R.R."/>
            <person name="Williams J.G."/>
            <person name="Dear P.H."/>
            <person name="Noegel A.A."/>
            <person name="Barrell B.G."/>
            <person name="Kuspa A."/>
        </authorList>
    </citation>
    <scope>NUCLEOTIDE SEQUENCE [LARGE SCALE GENOMIC DNA]</scope>
    <source>
        <strain>AX4</strain>
    </source>
</reference>
<proteinExistence type="predicted"/>
<gene>
    <name type="ORF">DDB_G0290003</name>
</gene>
<name>Y5951_DICDI</name>
<sequence length="57" mass="6846">MIYESIKNINFFTNKNNYNHIFNKSNYYFFNSNNTVASNEINQKTIRVVFSRPCWGV</sequence>